<feature type="chain" id="PRO_0000368534" description="ATP synthase subunit b">
    <location>
        <begin position="1"/>
        <end position="156"/>
    </location>
</feature>
<feature type="transmembrane region" description="Helical" evidence="1">
    <location>
        <begin position="11"/>
        <end position="31"/>
    </location>
</feature>
<proteinExistence type="inferred from homology"/>
<keyword id="KW-0066">ATP synthesis</keyword>
<keyword id="KW-0997">Cell inner membrane</keyword>
<keyword id="KW-1003">Cell membrane</keyword>
<keyword id="KW-0138">CF(0)</keyword>
<keyword id="KW-0375">Hydrogen ion transport</keyword>
<keyword id="KW-0406">Ion transport</keyword>
<keyword id="KW-0472">Membrane</keyword>
<keyword id="KW-0812">Transmembrane</keyword>
<keyword id="KW-1133">Transmembrane helix</keyword>
<keyword id="KW-0813">Transport</keyword>
<comment type="function">
    <text evidence="1">F(1)F(0) ATP synthase produces ATP from ADP in the presence of a proton or sodium gradient. F-type ATPases consist of two structural domains, F(1) containing the extramembraneous catalytic core and F(0) containing the membrane proton channel, linked together by a central stalk and a peripheral stalk. During catalysis, ATP synthesis in the catalytic domain of F(1) is coupled via a rotary mechanism of the central stalk subunits to proton translocation.</text>
</comment>
<comment type="function">
    <text evidence="1">Component of the F(0) channel, it forms part of the peripheral stalk, linking F(1) to F(0).</text>
</comment>
<comment type="subunit">
    <text evidence="1">F-type ATPases have 2 components, F(1) - the catalytic core - and F(0) - the membrane proton channel. F(1) has five subunits: alpha(3), beta(3), gamma(1), delta(1), epsilon(1). F(0) has three main subunits: a(1), b(2) and c(10-14). The alpha and beta chains form an alternating ring which encloses part of the gamma chain. F(1) is attached to F(0) by a central stalk formed by the gamma and epsilon chains, while a peripheral stalk is formed by the delta and b chains.</text>
</comment>
<comment type="subcellular location">
    <subcellularLocation>
        <location evidence="1">Cell inner membrane</location>
        <topology evidence="1">Single-pass membrane protein</topology>
    </subcellularLocation>
</comment>
<comment type="similarity">
    <text evidence="1">Belongs to the ATPase B chain family.</text>
</comment>
<organism>
    <name type="scientific">Klebsiella pneumoniae (strain 342)</name>
    <dbReference type="NCBI Taxonomy" id="507522"/>
    <lineage>
        <taxon>Bacteria</taxon>
        <taxon>Pseudomonadati</taxon>
        <taxon>Pseudomonadota</taxon>
        <taxon>Gammaproteobacteria</taxon>
        <taxon>Enterobacterales</taxon>
        <taxon>Enterobacteriaceae</taxon>
        <taxon>Klebsiella/Raoultella group</taxon>
        <taxon>Klebsiella</taxon>
        <taxon>Klebsiella pneumoniae complex</taxon>
    </lineage>
</organism>
<accession>B5XZM0</accession>
<protein>
    <recommendedName>
        <fullName evidence="1">ATP synthase subunit b</fullName>
    </recommendedName>
    <alternativeName>
        <fullName evidence="1">ATP synthase F(0) sector subunit b</fullName>
    </alternativeName>
    <alternativeName>
        <fullName evidence="1">ATPase subunit I</fullName>
    </alternativeName>
    <alternativeName>
        <fullName evidence="1">F-type ATPase subunit b</fullName>
        <shortName evidence="1">F-ATPase subunit b</shortName>
    </alternativeName>
</protein>
<reference key="1">
    <citation type="journal article" date="2008" name="PLoS Genet.">
        <title>Complete genome sequence of the N2-fixing broad host range endophyte Klebsiella pneumoniae 342 and virulence predictions verified in mice.</title>
        <authorList>
            <person name="Fouts D.E."/>
            <person name="Tyler H.L."/>
            <person name="DeBoy R.T."/>
            <person name="Daugherty S."/>
            <person name="Ren Q."/>
            <person name="Badger J.H."/>
            <person name="Durkin A.S."/>
            <person name="Huot H."/>
            <person name="Shrivastava S."/>
            <person name="Kothari S."/>
            <person name="Dodson R.J."/>
            <person name="Mohamoud Y."/>
            <person name="Khouri H."/>
            <person name="Roesch L.F.W."/>
            <person name="Krogfelt K.A."/>
            <person name="Struve C."/>
            <person name="Triplett E.W."/>
            <person name="Methe B.A."/>
        </authorList>
    </citation>
    <scope>NUCLEOTIDE SEQUENCE [LARGE SCALE GENOMIC DNA]</scope>
    <source>
        <strain>342</strain>
    </source>
</reference>
<sequence length="156" mass="17375">MNMNATILGQAIAFVIFVWFCMKYVWPPLMAAIEKRQKEISDGLASAERAKKDLDLAQANATDQLKKAKAEAQVIIEQANKRRSQILDEAKAEAEQERTKIVAQAQAEIDAERKRAREELRKQVAILAVAGAEKIIERSVDEAANSDIVDKLVAEL</sequence>
<dbReference type="EMBL" id="CP000964">
    <property type="protein sequence ID" value="ACI06661.1"/>
    <property type="molecule type" value="Genomic_DNA"/>
</dbReference>
<dbReference type="SMR" id="B5XZM0"/>
<dbReference type="KEGG" id="kpe:KPK_5540"/>
<dbReference type="HOGENOM" id="CLU_079215_4_5_6"/>
<dbReference type="Proteomes" id="UP000001734">
    <property type="component" value="Chromosome"/>
</dbReference>
<dbReference type="GO" id="GO:0005886">
    <property type="term" value="C:plasma membrane"/>
    <property type="evidence" value="ECO:0007669"/>
    <property type="project" value="UniProtKB-SubCell"/>
</dbReference>
<dbReference type="GO" id="GO:0045259">
    <property type="term" value="C:proton-transporting ATP synthase complex"/>
    <property type="evidence" value="ECO:0007669"/>
    <property type="project" value="UniProtKB-KW"/>
</dbReference>
<dbReference type="GO" id="GO:0046933">
    <property type="term" value="F:proton-transporting ATP synthase activity, rotational mechanism"/>
    <property type="evidence" value="ECO:0007669"/>
    <property type="project" value="UniProtKB-UniRule"/>
</dbReference>
<dbReference type="GO" id="GO:0046961">
    <property type="term" value="F:proton-transporting ATPase activity, rotational mechanism"/>
    <property type="evidence" value="ECO:0007669"/>
    <property type="project" value="TreeGrafter"/>
</dbReference>
<dbReference type="CDD" id="cd06503">
    <property type="entry name" value="ATP-synt_Fo_b"/>
    <property type="match status" value="1"/>
</dbReference>
<dbReference type="FunFam" id="1.20.5.620:FF:000001">
    <property type="entry name" value="ATP synthase subunit b"/>
    <property type="match status" value="1"/>
</dbReference>
<dbReference type="Gene3D" id="1.20.5.620">
    <property type="entry name" value="F1F0 ATP synthase subunit B, membrane domain"/>
    <property type="match status" value="1"/>
</dbReference>
<dbReference type="HAMAP" id="MF_01398">
    <property type="entry name" value="ATP_synth_b_bprime"/>
    <property type="match status" value="1"/>
</dbReference>
<dbReference type="InterPro" id="IPR028987">
    <property type="entry name" value="ATP_synth_B-like_membr_sf"/>
</dbReference>
<dbReference type="InterPro" id="IPR002146">
    <property type="entry name" value="ATP_synth_b/b'su_bac/chlpt"/>
</dbReference>
<dbReference type="InterPro" id="IPR005864">
    <property type="entry name" value="ATP_synth_F0_bsu_bac"/>
</dbReference>
<dbReference type="InterPro" id="IPR050059">
    <property type="entry name" value="ATP_synthase_B_chain"/>
</dbReference>
<dbReference type="NCBIfam" id="TIGR01144">
    <property type="entry name" value="ATP_synt_b"/>
    <property type="match status" value="1"/>
</dbReference>
<dbReference type="NCBIfam" id="NF004411">
    <property type="entry name" value="PRK05759.1-2"/>
    <property type="match status" value="1"/>
</dbReference>
<dbReference type="NCBIfam" id="NF004413">
    <property type="entry name" value="PRK05759.1-4"/>
    <property type="match status" value="1"/>
</dbReference>
<dbReference type="PANTHER" id="PTHR33445:SF1">
    <property type="entry name" value="ATP SYNTHASE SUBUNIT B"/>
    <property type="match status" value="1"/>
</dbReference>
<dbReference type="PANTHER" id="PTHR33445">
    <property type="entry name" value="ATP SYNTHASE SUBUNIT B', CHLOROPLASTIC"/>
    <property type="match status" value="1"/>
</dbReference>
<dbReference type="Pfam" id="PF00430">
    <property type="entry name" value="ATP-synt_B"/>
    <property type="match status" value="1"/>
</dbReference>
<dbReference type="SUPFAM" id="SSF81573">
    <property type="entry name" value="F1F0 ATP synthase subunit B, membrane domain"/>
    <property type="match status" value="1"/>
</dbReference>
<name>ATPF_KLEP3</name>
<gene>
    <name evidence="1" type="primary">atpF</name>
    <name type="ordered locus">KPK_5540</name>
</gene>
<evidence type="ECO:0000255" key="1">
    <source>
        <dbReference type="HAMAP-Rule" id="MF_01398"/>
    </source>
</evidence>